<sequence>MNAWEVNFDGLVGLTHHYAGLSFGNEASTRHRFQVSNPRQAAKQGLLKMKALADAGFPQAVIPPHERPFIPVLRQLGFSGSDEQVLEKVARQAPHWLSSVSSASPMWVANAATIAPSADTLDGKVHLTVANLNNKFHRSLEAHVTESLLKAIFNDEEKFSVHSALPQVALLGDEGAANHNRLGGHYGEPGMQLFVYGREEGNDTRPSRYPARQTREASEAVARLNQVNPQQVIFAQQNPDVIDQGVFHNDVIAVSNRQVLFCHQQAFARQSQLLANLRARVNGFMAIEVPATQVSVSDAVSTYLFNSQLLSRDDGSMMLVLPQECREHAGVWGYLNELLAADNPISELKVFDLRESMANGGGPACLRLRVVLTEEERRAVNPAVMMNDTLFNALNDWVDRYYRDRLTAADLADPQLLRGGREALDVLSQLLNLGSVYPFQREGGGNG</sequence>
<organism>
    <name type="scientific">Escherichia coli (strain 55989 / EAEC)</name>
    <dbReference type="NCBI Taxonomy" id="585055"/>
    <lineage>
        <taxon>Bacteria</taxon>
        <taxon>Pseudomonadati</taxon>
        <taxon>Pseudomonadota</taxon>
        <taxon>Gammaproteobacteria</taxon>
        <taxon>Enterobacterales</taxon>
        <taxon>Enterobacteriaceae</taxon>
        <taxon>Escherichia</taxon>
    </lineage>
</organism>
<comment type="function">
    <text evidence="1">Catalyzes the hydrolysis of N(2)-succinylarginine into N(2)-succinylornithine, ammonia and CO(2).</text>
</comment>
<comment type="catalytic activity">
    <reaction evidence="1">
        <text>N(2)-succinyl-L-arginine + 2 H2O + 2 H(+) = N(2)-succinyl-L-ornithine + 2 NH4(+) + CO2</text>
        <dbReference type="Rhea" id="RHEA:19533"/>
        <dbReference type="ChEBI" id="CHEBI:15377"/>
        <dbReference type="ChEBI" id="CHEBI:15378"/>
        <dbReference type="ChEBI" id="CHEBI:16526"/>
        <dbReference type="ChEBI" id="CHEBI:28938"/>
        <dbReference type="ChEBI" id="CHEBI:58241"/>
        <dbReference type="ChEBI" id="CHEBI:58514"/>
        <dbReference type="EC" id="3.5.3.23"/>
    </reaction>
</comment>
<comment type="pathway">
    <text evidence="1">Amino-acid degradation; L-arginine degradation via AST pathway; L-glutamate and succinate from L-arginine: step 2/5.</text>
</comment>
<comment type="subunit">
    <text evidence="1">Homodimer.</text>
</comment>
<comment type="similarity">
    <text evidence="1">Belongs to the succinylarginine dihydrolase family.</text>
</comment>
<proteinExistence type="inferred from homology"/>
<evidence type="ECO:0000255" key="1">
    <source>
        <dbReference type="HAMAP-Rule" id="MF_01172"/>
    </source>
</evidence>
<name>ASTB_ECO55</name>
<keyword id="KW-0056">Arginine metabolism</keyword>
<keyword id="KW-0378">Hydrolase</keyword>
<keyword id="KW-1185">Reference proteome</keyword>
<protein>
    <recommendedName>
        <fullName evidence="1">N-succinylarginine dihydrolase</fullName>
        <ecNumber evidence="1">3.5.3.23</ecNumber>
    </recommendedName>
</protein>
<gene>
    <name evidence="1" type="primary">astB</name>
    <name type="ordered locus">EC55989_1913</name>
</gene>
<dbReference type="EC" id="3.5.3.23" evidence="1"/>
<dbReference type="EMBL" id="CU928145">
    <property type="protein sequence ID" value="CAU97772.1"/>
    <property type="molecule type" value="Genomic_DNA"/>
</dbReference>
<dbReference type="RefSeq" id="WP_000995007.1">
    <property type="nucleotide sequence ID" value="NC_011748.1"/>
</dbReference>
<dbReference type="SMR" id="B7L6L9"/>
<dbReference type="KEGG" id="eck:EC55989_1913"/>
<dbReference type="HOGENOM" id="CLU_053835_0_0_6"/>
<dbReference type="UniPathway" id="UPA00185">
    <property type="reaction ID" value="UER00280"/>
</dbReference>
<dbReference type="Proteomes" id="UP000000746">
    <property type="component" value="Chromosome"/>
</dbReference>
<dbReference type="GO" id="GO:0009015">
    <property type="term" value="F:N-succinylarginine dihydrolase activity"/>
    <property type="evidence" value="ECO:0007669"/>
    <property type="project" value="UniProtKB-UniRule"/>
</dbReference>
<dbReference type="GO" id="GO:0019544">
    <property type="term" value="P:arginine catabolic process to glutamate"/>
    <property type="evidence" value="ECO:0007669"/>
    <property type="project" value="UniProtKB-UniRule"/>
</dbReference>
<dbReference type="GO" id="GO:0019545">
    <property type="term" value="P:arginine catabolic process to succinate"/>
    <property type="evidence" value="ECO:0007669"/>
    <property type="project" value="UniProtKB-UniRule"/>
</dbReference>
<dbReference type="FunFam" id="3.75.10.20:FF:000001">
    <property type="entry name" value="N-succinylarginine dihydrolase"/>
    <property type="match status" value="1"/>
</dbReference>
<dbReference type="Gene3D" id="3.75.10.20">
    <property type="entry name" value="Succinylarginine dihydrolase"/>
    <property type="match status" value="1"/>
</dbReference>
<dbReference type="HAMAP" id="MF_01172">
    <property type="entry name" value="AstB"/>
    <property type="match status" value="1"/>
</dbReference>
<dbReference type="InterPro" id="IPR037031">
    <property type="entry name" value="AstB_sf"/>
</dbReference>
<dbReference type="InterPro" id="IPR007079">
    <property type="entry name" value="SuccinylArg_d-Hdrlase_AstB"/>
</dbReference>
<dbReference type="NCBIfam" id="TIGR03241">
    <property type="entry name" value="arg_catab_astB"/>
    <property type="match status" value="1"/>
</dbReference>
<dbReference type="NCBIfam" id="NF009789">
    <property type="entry name" value="PRK13281.1"/>
    <property type="match status" value="1"/>
</dbReference>
<dbReference type="PANTHER" id="PTHR30420">
    <property type="entry name" value="N-SUCCINYLARGININE DIHYDROLASE"/>
    <property type="match status" value="1"/>
</dbReference>
<dbReference type="PANTHER" id="PTHR30420:SF2">
    <property type="entry name" value="N-SUCCINYLARGININE DIHYDROLASE"/>
    <property type="match status" value="1"/>
</dbReference>
<dbReference type="Pfam" id="PF04996">
    <property type="entry name" value="AstB"/>
    <property type="match status" value="1"/>
</dbReference>
<dbReference type="SUPFAM" id="SSF55909">
    <property type="entry name" value="Pentein"/>
    <property type="match status" value="1"/>
</dbReference>
<reference key="1">
    <citation type="journal article" date="2009" name="PLoS Genet.">
        <title>Organised genome dynamics in the Escherichia coli species results in highly diverse adaptive paths.</title>
        <authorList>
            <person name="Touchon M."/>
            <person name="Hoede C."/>
            <person name="Tenaillon O."/>
            <person name="Barbe V."/>
            <person name="Baeriswyl S."/>
            <person name="Bidet P."/>
            <person name="Bingen E."/>
            <person name="Bonacorsi S."/>
            <person name="Bouchier C."/>
            <person name="Bouvet O."/>
            <person name="Calteau A."/>
            <person name="Chiapello H."/>
            <person name="Clermont O."/>
            <person name="Cruveiller S."/>
            <person name="Danchin A."/>
            <person name="Diard M."/>
            <person name="Dossat C."/>
            <person name="Karoui M.E."/>
            <person name="Frapy E."/>
            <person name="Garry L."/>
            <person name="Ghigo J.M."/>
            <person name="Gilles A.M."/>
            <person name="Johnson J."/>
            <person name="Le Bouguenec C."/>
            <person name="Lescat M."/>
            <person name="Mangenot S."/>
            <person name="Martinez-Jehanne V."/>
            <person name="Matic I."/>
            <person name="Nassif X."/>
            <person name="Oztas S."/>
            <person name="Petit M.A."/>
            <person name="Pichon C."/>
            <person name="Rouy Z."/>
            <person name="Ruf C.S."/>
            <person name="Schneider D."/>
            <person name="Tourret J."/>
            <person name="Vacherie B."/>
            <person name="Vallenet D."/>
            <person name="Medigue C."/>
            <person name="Rocha E.P.C."/>
            <person name="Denamur E."/>
        </authorList>
    </citation>
    <scope>NUCLEOTIDE SEQUENCE [LARGE SCALE GENOMIC DNA]</scope>
    <source>
        <strain>55989 / EAEC</strain>
    </source>
</reference>
<feature type="chain" id="PRO_1000164369" description="N-succinylarginine dihydrolase">
    <location>
        <begin position="1"/>
        <end position="447"/>
    </location>
</feature>
<feature type="active site" evidence="1">
    <location>
        <position position="174"/>
    </location>
</feature>
<feature type="active site" evidence="1">
    <location>
        <position position="248"/>
    </location>
</feature>
<feature type="active site" description="Nucleophile" evidence="1">
    <location>
        <position position="365"/>
    </location>
</feature>
<feature type="binding site" evidence="1">
    <location>
        <begin position="19"/>
        <end position="28"/>
    </location>
    <ligand>
        <name>substrate</name>
    </ligand>
</feature>
<feature type="binding site" evidence="1">
    <location>
        <position position="110"/>
    </location>
    <ligand>
        <name>substrate</name>
    </ligand>
</feature>
<feature type="binding site" evidence="1">
    <location>
        <begin position="137"/>
        <end position="138"/>
    </location>
    <ligand>
        <name>substrate</name>
    </ligand>
</feature>
<feature type="binding site" evidence="1">
    <location>
        <position position="212"/>
    </location>
    <ligand>
        <name>substrate</name>
    </ligand>
</feature>
<feature type="binding site" evidence="1">
    <location>
        <position position="250"/>
    </location>
    <ligand>
        <name>substrate</name>
    </ligand>
</feature>
<feature type="binding site" evidence="1">
    <location>
        <position position="359"/>
    </location>
    <ligand>
        <name>substrate</name>
    </ligand>
</feature>
<accession>B7L6L9</accession>